<evidence type="ECO:0000250" key="1"/>
<evidence type="ECO:0000256" key="2">
    <source>
        <dbReference type="SAM" id="MobiDB-lite"/>
    </source>
</evidence>
<evidence type="ECO:0000269" key="3">
    <source>
    </source>
</evidence>
<evidence type="ECO:0000269" key="4">
    <source>
    </source>
</evidence>
<evidence type="ECO:0000269" key="5">
    <source>
    </source>
</evidence>
<evidence type="ECO:0000305" key="6"/>
<protein>
    <recommendedName>
        <fullName>26S proteasome non-ATPase regulatory subunit 2 homolog B</fullName>
    </recommendedName>
    <alternativeName>
        <fullName>26S proteasome regulatory subunit RPN1b</fullName>
        <shortName>AtRPN1b</shortName>
    </alternativeName>
    <alternativeName>
        <fullName>26S proteasome regulatory subunit S2 homolog B</fullName>
    </alternativeName>
</protein>
<name>PSD2B_ARATH</name>
<sequence>MAPVPDPNSVGGGAKRDEATTKIPSKDSKKKDDKKEEDLSEEDLQLKQNLELYVERVQDPNPELQKIALESMRKEIRDSTSSMTSVPKPLKFLRPHYGVLKEFHAKMAESDLKKMLADILSVLALTMSAEGERESLNYRLNGSESDIGSWGHEYVRNLAGEIAKEYTIRQGEESSIEDLMDLVQQIVSFHMKHNAETEAVDLLMDVEDLDLLLEHVDNTNFRRTCNYLTSAAKYLPGPDDMLVLDIAYMIYIKFAEYPNALQIALFLDNMQYVKQVFTSCTDLVKKKQFCYMIARHGMTFELDQEMVANDEDKEALQDIVNNSKLSEGYLTLARDIEVMEAKTPEDIYKAHLLDGRASSGPSVDSARQNLSATFVNAFVNAGFGQDKLMTVPSDSTSGSAGNWLFKNKEHGKTSAVASLGMIQLWDVETGLGHLDKYFHSNDNPVVAGALLGVGIVNCGIKNDCDPAFALLSGYIDNEDSSVRIGAIMGLGIAYAGSQNDQIKIRLSPILNDANAPLDVIAFAALSLGMIYVGSCNEEVAQSIIFALMDRSEAELGEALTRFLPLGLGLLYLGKQESVEATAEVSKTFNEKIRKYCDMTLLSCAYAGTGNVLKVQDLLAQCGEHLVKGDIHQGPAVIGLAMVAMSEELGLDMEIRSLERVLQYGEQNIRRAVPLALGLLCISNPKVTVMDTLSRLSHDTDSEVAMAAIISLGLIGAGTNNARIAGMLRNLSSYYYKDASLLFCVRIAQGFVHMGKGLLTLNPFHSERLLLSPTALAGIVTLLHACLDMKSIILGKYHYVLYFLVLAMQPRMMLTVDQSLKPISVPVRVGQAVDVVGQAGRPKTITGFQTHSTPVLLAAGERAELATEKYIPLSPILEGFVILKENPDYREE</sequence>
<accession>Q6XJG8</accession>
<accession>O49456</accession>
<feature type="chain" id="PRO_0000399922" description="26S proteasome non-ATPase regulatory subunit 2 homolog B">
    <location>
        <begin position="1"/>
        <end position="891"/>
    </location>
</feature>
<feature type="repeat" description="PC 1">
    <location>
        <begin position="414"/>
        <end position="447"/>
    </location>
</feature>
<feature type="repeat" description="PC 2">
    <location>
        <begin position="448"/>
        <end position="484"/>
    </location>
</feature>
<feature type="repeat" description="PC 3">
    <location>
        <begin position="485"/>
        <end position="519"/>
    </location>
</feature>
<feature type="repeat" description="PC 4">
    <location>
        <begin position="522"/>
        <end position="556"/>
    </location>
</feature>
<feature type="repeat" description="PC 5">
    <location>
        <begin position="565"/>
        <end position="594"/>
    </location>
</feature>
<feature type="repeat" description="PC 6">
    <location>
        <begin position="674"/>
        <end position="705"/>
    </location>
</feature>
<feature type="repeat" description="PC 7">
    <location>
        <begin position="724"/>
        <end position="739"/>
    </location>
</feature>
<feature type="region of interest" description="Disordered" evidence="2">
    <location>
        <begin position="1"/>
        <end position="43"/>
    </location>
</feature>
<feature type="compositionally biased region" description="Basic and acidic residues" evidence="2">
    <location>
        <begin position="14"/>
        <end position="37"/>
    </location>
</feature>
<proteinExistence type="evidence at protein level"/>
<comment type="function">
    <text evidence="1">Acts as a regulatory subunit of the 26 proteasome which is involved in the ATP-dependent degradation of ubiquitinated proteins.</text>
</comment>
<comment type="subunit">
    <text evidence="3 5">Component of the 19S regulatory particle (RP/PA700) base subcomplex of the 26S proteasome. The 26S proteasome is composed of a core protease (CP), known as the 20S proteasome, capped at one or both ends by the 19S regulatory particle (RP/PA700). The RP/PA700 complex is composed of at least 17 different subunits in two subcomplexes, the base and the lid, which form the portions proximal and distal to the 20S proteolytic core, respectively.</text>
</comment>
<comment type="tissue specificity">
    <text evidence="3 4">Expressed in stems, leaves, buds, flowers, siliques and developing seeds.</text>
</comment>
<comment type="developmental stage">
    <text evidence="4">Detected in the entire flower with strong signals in carpels, especially in differentiating ovules and the carpel wall. Patchy localization with strong levels in particular cells. In anthers, present at a high level in tetrads of microspores and the tapetum. After fertilization, mostly observed in the embryo up to the heart stage and in the chalazal endospem. Expressed at high levels in silique wall at all stages of carpel development.</text>
</comment>
<comment type="PTM">
    <text evidence="1">Ubiquitinated.</text>
</comment>
<comment type="disruption phenotype">
    <text evidence="4">Normal phenotype.</text>
</comment>
<comment type="similarity">
    <text evidence="6">Belongs to the proteasome subunit S2 family.</text>
</comment>
<comment type="sequence caution" evidence="6">
    <conflict type="erroneous gene model prediction">
        <sequence resource="EMBL-CDS" id="CAA16886"/>
    </conflict>
</comment>
<comment type="sequence caution" evidence="6">
    <conflict type="frameshift">
        <sequence resource="EMBL-CDS" id="CAA16886"/>
    </conflict>
</comment>
<comment type="sequence caution" evidence="6">
    <conflict type="erroneous gene model prediction">
        <sequence resource="EMBL-CDS" id="CAB79649"/>
    </conflict>
</comment>
<comment type="sequence caution" evidence="6">
    <conflict type="frameshift">
        <sequence resource="EMBL-CDS" id="CAB79649"/>
    </conflict>
</comment>
<gene>
    <name type="primary">RPN1B</name>
    <name type="ordered locus">At4g28470</name>
    <name type="ORF">F20O9.150</name>
</gene>
<keyword id="KW-0647">Proteasome</keyword>
<keyword id="KW-1185">Reference proteome</keyword>
<keyword id="KW-0677">Repeat</keyword>
<keyword id="KW-0832">Ubl conjugation</keyword>
<reference key="1">
    <citation type="journal article" date="2004" name="J. Biol. Chem.">
        <title>Purification of the Arabidopsis 26 S proteasome: biochemical and molecular analyses revealed the presence of multiple isoforms.</title>
        <authorList>
            <person name="Yang P."/>
            <person name="Fu H."/>
            <person name="Walker J."/>
            <person name="Papa C.M."/>
            <person name="Smalle J."/>
            <person name="Ju Y.-M."/>
            <person name="Vierstra R.D."/>
        </authorList>
    </citation>
    <scope>NUCLEOTIDE SEQUENCE [MRNA]</scope>
    <scope>SUBUNIT</scope>
    <scope>IDENTIFICATION BY MASS SPECTROMETRY</scope>
    <scope>TISSUE SPECIFICITY</scope>
    <source>
        <strain>cv. Columbia</strain>
    </source>
</reference>
<reference key="2">
    <citation type="journal article" date="1999" name="Nature">
        <title>Sequence and analysis of chromosome 4 of the plant Arabidopsis thaliana.</title>
        <authorList>
            <person name="Mayer K.F.X."/>
            <person name="Schueller C."/>
            <person name="Wambutt R."/>
            <person name="Murphy G."/>
            <person name="Volckaert G."/>
            <person name="Pohl T."/>
            <person name="Duesterhoeft A."/>
            <person name="Stiekema W."/>
            <person name="Entian K.-D."/>
            <person name="Terryn N."/>
            <person name="Harris B."/>
            <person name="Ansorge W."/>
            <person name="Brandt P."/>
            <person name="Grivell L.A."/>
            <person name="Rieger M."/>
            <person name="Weichselgartner M."/>
            <person name="de Simone V."/>
            <person name="Obermaier B."/>
            <person name="Mache R."/>
            <person name="Mueller M."/>
            <person name="Kreis M."/>
            <person name="Delseny M."/>
            <person name="Puigdomenech P."/>
            <person name="Watson M."/>
            <person name="Schmidtheini T."/>
            <person name="Reichert B."/>
            <person name="Portetelle D."/>
            <person name="Perez-Alonso M."/>
            <person name="Boutry M."/>
            <person name="Bancroft I."/>
            <person name="Vos P."/>
            <person name="Hoheisel J."/>
            <person name="Zimmermann W."/>
            <person name="Wedler H."/>
            <person name="Ridley P."/>
            <person name="Langham S.-A."/>
            <person name="McCullagh B."/>
            <person name="Bilham L."/>
            <person name="Robben J."/>
            <person name="van der Schueren J."/>
            <person name="Grymonprez B."/>
            <person name="Chuang Y.-J."/>
            <person name="Vandenbussche F."/>
            <person name="Braeken M."/>
            <person name="Weltjens I."/>
            <person name="Voet M."/>
            <person name="Bastiaens I."/>
            <person name="Aert R."/>
            <person name="Defoor E."/>
            <person name="Weitzenegger T."/>
            <person name="Bothe G."/>
            <person name="Ramsperger U."/>
            <person name="Hilbert H."/>
            <person name="Braun M."/>
            <person name="Holzer E."/>
            <person name="Brandt A."/>
            <person name="Peters S."/>
            <person name="van Staveren M."/>
            <person name="Dirkse W."/>
            <person name="Mooijman P."/>
            <person name="Klein Lankhorst R."/>
            <person name="Rose M."/>
            <person name="Hauf J."/>
            <person name="Koetter P."/>
            <person name="Berneiser S."/>
            <person name="Hempel S."/>
            <person name="Feldpausch M."/>
            <person name="Lamberth S."/>
            <person name="Van den Daele H."/>
            <person name="De Keyser A."/>
            <person name="Buysshaert C."/>
            <person name="Gielen J."/>
            <person name="Villarroel R."/>
            <person name="De Clercq R."/>
            <person name="van Montagu M."/>
            <person name="Rogers J."/>
            <person name="Cronin A."/>
            <person name="Quail M.A."/>
            <person name="Bray-Allen S."/>
            <person name="Clark L."/>
            <person name="Doggett J."/>
            <person name="Hall S."/>
            <person name="Kay M."/>
            <person name="Lennard N."/>
            <person name="McLay K."/>
            <person name="Mayes R."/>
            <person name="Pettett A."/>
            <person name="Rajandream M.A."/>
            <person name="Lyne M."/>
            <person name="Benes V."/>
            <person name="Rechmann S."/>
            <person name="Borkova D."/>
            <person name="Bloecker H."/>
            <person name="Scharfe M."/>
            <person name="Grimm M."/>
            <person name="Loehnert T.-H."/>
            <person name="Dose S."/>
            <person name="de Haan M."/>
            <person name="Maarse A.C."/>
            <person name="Schaefer M."/>
            <person name="Mueller-Auer S."/>
            <person name="Gabel C."/>
            <person name="Fuchs M."/>
            <person name="Fartmann B."/>
            <person name="Granderath K."/>
            <person name="Dauner D."/>
            <person name="Herzl A."/>
            <person name="Neumann S."/>
            <person name="Argiriou A."/>
            <person name="Vitale D."/>
            <person name="Liguori R."/>
            <person name="Piravandi E."/>
            <person name="Massenet O."/>
            <person name="Quigley F."/>
            <person name="Clabauld G."/>
            <person name="Muendlein A."/>
            <person name="Felber R."/>
            <person name="Schnabl S."/>
            <person name="Hiller R."/>
            <person name="Schmidt W."/>
            <person name="Lecharny A."/>
            <person name="Aubourg S."/>
            <person name="Chefdor F."/>
            <person name="Cooke R."/>
            <person name="Berger C."/>
            <person name="Monfort A."/>
            <person name="Casacuberta E."/>
            <person name="Gibbons T."/>
            <person name="Weber N."/>
            <person name="Vandenbol M."/>
            <person name="Bargues M."/>
            <person name="Terol J."/>
            <person name="Torres A."/>
            <person name="Perez-Perez A."/>
            <person name="Purnelle B."/>
            <person name="Bent E."/>
            <person name="Johnson S."/>
            <person name="Tacon D."/>
            <person name="Jesse T."/>
            <person name="Heijnen L."/>
            <person name="Schwarz S."/>
            <person name="Scholler P."/>
            <person name="Heber S."/>
            <person name="Francs P."/>
            <person name="Bielke C."/>
            <person name="Frishman D."/>
            <person name="Haase D."/>
            <person name="Lemcke K."/>
            <person name="Mewes H.-W."/>
            <person name="Stocker S."/>
            <person name="Zaccaria P."/>
            <person name="Bevan M."/>
            <person name="Wilson R.K."/>
            <person name="de la Bastide M."/>
            <person name="Habermann K."/>
            <person name="Parnell L."/>
            <person name="Dedhia N."/>
            <person name="Gnoj L."/>
            <person name="Schutz K."/>
            <person name="Huang E."/>
            <person name="Spiegel L."/>
            <person name="Sekhon M."/>
            <person name="Murray J."/>
            <person name="Sheet P."/>
            <person name="Cordes M."/>
            <person name="Abu-Threideh J."/>
            <person name="Stoneking T."/>
            <person name="Kalicki J."/>
            <person name="Graves T."/>
            <person name="Harmon G."/>
            <person name="Edwards J."/>
            <person name="Latreille P."/>
            <person name="Courtney L."/>
            <person name="Cloud J."/>
            <person name="Abbott A."/>
            <person name="Scott K."/>
            <person name="Johnson D."/>
            <person name="Minx P."/>
            <person name="Bentley D."/>
            <person name="Fulton B."/>
            <person name="Miller N."/>
            <person name="Greco T."/>
            <person name="Kemp K."/>
            <person name="Kramer J."/>
            <person name="Fulton L."/>
            <person name="Mardis E."/>
            <person name="Dante M."/>
            <person name="Pepin K."/>
            <person name="Hillier L.W."/>
            <person name="Nelson J."/>
            <person name="Spieth J."/>
            <person name="Ryan E."/>
            <person name="Andrews S."/>
            <person name="Geisel C."/>
            <person name="Layman D."/>
            <person name="Du H."/>
            <person name="Ali J."/>
            <person name="Berghoff A."/>
            <person name="Jones K."/>
            <person name="Drone K."/>
            <person name="Cotton M."/>
            <person name="Joshu C."/>
            <person name="Antonoiu B."/>
            <person name="Zidanic M."/>
            <person name="Strong C."/>
            <person name="Sun H."/>
            <person name="Lamar B."/>
            <person name="Yordan C."/>
            <person name="Ma P."/>
            <person name="Zhong J."/>
            <person name="Preston R."/>
            <person name="Vil D."/>
            <person name="Shekher M."/>
            <person name="Matero A."/>
            <person name="Shah R."/>
            <person name="Swaby I.K."/>
            <person name="O'Shaughnessy A."/>
            <person name="Rodriguez M."/>
            <person name="Hoffman J."/>
            <person name="Till S."/>
            <person name="Granat S."/>
            <person name="Shohdy N."/>
            <person name="Hasegawa A."/>
            <person name="Hameed A."/>
            <person name="Lodhi M."/>
            <person name="Johnson A."/>
            <person name="Chen E."/>
            <person name="Marra M.A."/>
            <person name="Martienssen R."/>
            <person name="McCombie W.R."/>
        </authorList>
    </citation>
    <scope>NUCLEOTIDE SEQUENCE [LARGE SCALE GENOMIC DNA]</scope>
    <source>
        <strain>cv. Columbia</strain>
    </source>
</reference>
<reference key="3">
    <citation type="journal article" date="2017" name="Plant J.">
        <title>Araport11: a complete reannotation of the Arabidopsis thaliana reference genome.</title>
        <authorList>
            <person name="Cheng C.Y."/>
            <person name="Krishnakumar V."/>
            <person name="Chan A.P."/>
            <person name="Thibaud-Nissen F."/>
            <person name="Schobel S."/>
            <person name="Town C.D."/>
        </authorList>
    </citation>
    <scope>GENOME REANNOTATION</scope>
    <source>
        <strain>cv. Columbia</strain>
    </source>
</reference>
<reference key="4">
    <citation type="journal article" date="2005" name="Plant Cell">
        <title>The RPN1 subunit of the 26S proteasome in Arabidopsis is essential for embryogenesis.</title>
        <authorList>
            <person name="Brukhin V."/>
            <person name="Gheyselinck J."/>
            <person name="Gagliardini V."/>
            <person name="Genschik P."/>
            <person name="Grossniklaus U."/>
        </authorList>
    </citation>
    <scope>DISRUPTION PHENOTYPE</scope>
    <scope>TISSUE SPECIFICITY</scope>
    <scope>DEVELOPMENTAL STAGE</scope>
</reference>
<reference key="5">
    <citation type="journal article" date="2010" name="J. Biol. Chem.">
        <title>Affinity purification of the Arabidopsis 26 S proteasome reveals a diverse array of plant proteolytic complexes.</title>
        <authorList>
            <person name="Book A.J."/>
            <person name="Gladman N.P."/>
            <person name="Lee S.S."/>
            <person name="Scalf M."/>
            <person name="Smith L.M."/>
            <person name="Vierstra R.D."/>
        </authorList>
    </citation>
    <scope>IDENTIFICATION BY MASS SPECTROMETRY</scope>
    <scope>CHARACTERIZATION OF THE 26S PROTEASOME COMPLEX</scope>
    <scope>SUBUNIT</scope>
</reference>
<organism>
    <name type="scientific">Arabidopsis thaliana</name>
    <name type="common">Mouse-ear cress</name>
    <dbReference type="NCBI Taxonomy" id="3702"/>
    <lineage>
        <taxon>Eukaryota</taxon>
        <taxon>Viridiplantae</taxon>
        <taxon>Streptophyta</taxon>
        <taxon>Embryophyta</taxon>
        <taxon>Tracheophyta</taxon>
        <taxon>Spermatophyta</taxon>
        <taxon>Magnoliopsida</taxon>
        <taxon>eudicotyledons</taxon>
        <taxon>Gunneridae</taxon>
        <taxon>Pentapetalae</taxon>
        <taxon>rosids</taxon>
        <taxon>malvids</taxon>
        <taxon>Brassicales</taxon>
        <taxon>Brassicaceae</taxon>
        <taxon>Camelineae</taxon>
        <taxon>Arabidopsis</taxon>
    </lineage>
</organism>
<dbReference type="EMBL" id="AY230829">
    <property type="protein sequence ID" value="AAP86656.1"/>
    <property type="molecule type" value="mRNA"/>
</dbReference>
<dbReference type="EMBL" id="AL021749">
    <property type="protein sequence ID" value="CAA16886.1"/>
    <property type="status" value="ALT_SEQ"/>
    <property type="molecule type" value="Genomic_DNA"/>
</dbReference>
<dbReference type="EMBL" id="AL161572">
    <property type="protein sequence ID" value="CAB79649.1"/>
    <property type="status" value="ALT_SEQ"/>
    <property type="molecule type" value="Genomic_DNA"/>
</dbReference>
<dbReference type="EMBL" id="CP002687">
    <property type="protein sequence ID" value="AEE85490.1"/>
    <property type="molecule type" value="Genomic_DNA"/>
</dbReference>
<dbReference type="PIR" id="T04617">
    <property type="entry name" value="T04617"/>
</dbReference>
<dbReference type="RefSeq" id="NP_194576.5">
    <property type="nucleotide sequence ID" value="NM_118989.6"/>
</dbReference>
<dbReference type="SMR" id="Q6XJG8"/>
<dbReference type="BioGRID" id="14251">
    <property type="interactions" value="138"/>
</dbReference>
<dbReference type="FunCoup" id="Q6XJG8">
    <property type="interactions" value="5500"/>
</dbReference>
<dbReference type="IntAct" id="Q6XJG8">
    <property type="interactions" value="2"/>
</dbReference>
<dbReference type="STRING" id="3702.Q6XJG8"/>
<dbReference type="iPTMnet" id="Q6XJG8"/>
<dbReference type="MetOSite" id="Q6XJG8"/>
<dbReference type="PaxDb" id="3702-AT4G28470.1"/>
<dbReference type="ProteomicsDB" id="226006"/>
<dbReference type="EnsemblPlants" id="AT4G28470.1">
    <property type="protein sequence ID" value="AT4G28470.1"/>
    <property type="gene ID" value="AT4G28470"/>
</dbReference>
<dbReference type="GeneID" id="828964"/>
<dbReference type="Gramene" id="AT4G28470.1">
    <property type="protein sequence ID" value="AT4G28470.1"/>
    <property type="gene ID" value="AT4G28470"/>
</dbReference>
<dbReference type="KEGG" id="ath:AT4G28470"/>
<dbReference type="Araport" id="AT4G28470"/>
<dbReference type="TAIR" id="AT4G28470">
    <property type="gene designation" value="RPN1B"/>
</dbReference>
<dbReference type="eggNOG" id="KOG2005">
    <property type="taxonomic scope" value="Eukaryota"/>
</dbReference>
<dbReference type="HOGENOM" id="CLU_008705_1_0_1"/>
<dbReference type="InParanoid" id="Q6XJG8"/>
<dbReference type="OMA" id="LNYRMIG"/>
<dbReference type="PhylomeDB" id="Q6XJG8"/>
<dbReference type="PRO" id="PR:Q6XJG8"/>
<dbReference type="Proteomes" id="UP000006548">
    <property type="component" value="Chromosome 4"/>
</dbReference>
<dbReference type="ExpressionAtlas" id="Q6XJG8">
    <property type="expression patterns" value="baseline and differential"/>
</dbReference>
<dbReference type="GO" id="GO:0005886">
    <property type="term" value="C:plasma membrane"/>
    <property type="evidence" value="ECO:0007005"/>
    <property type="project" value="TAIR"/>
</dbReference>
<dbReference type="GO" id="GO:0000502">
    <property type="term" value="C:proteasome complex"/>
    <property type="evidence" value="ECO:0000314"/>
    <property type="project" value="TAIR"/>
</dbReference>
<dbReference type="GO" id="GO:0008540">
    <property type="term" value="C:proteasome regulatory particle, base subcomplex"/>
    <property type="evidence" value="ECO:0000304"/>
    <property type="project" value="TAIR"/>
</dbReference>
<dbReference type="GO" id="GO:0030234">
    <property type="term" value="F:enzyme regulator activity"/>
    <property type="evidence" value="ECO:0007669"/>
    <property type="project" value="InterPro"/>
</dbReference>
<dbReference type="GO" id="GO:0030163">
    <property type="term" value="P:protein catabolic process"/>
    <property type="evidence" value="ECO:0000304"/>
    <property type="project" value="TAIR"/>
</dbReference>
<dbReference type="GO" id="GO:0042176">
    <property type="term" value="P:regulation of protein catabolic process"/>
    <property type="evidence" value="ECO:0007669"/>
    <property type="project" value="InterPro"/>
</dbReference>
<dbReference type="FunFam" id="1.25.10.10:FF:000084">
    <property type="entry name" value="26S proteasome non-ATPase regulatory subunit 2 homolog"/>
    <property type="match status" value="1"/>
</dbReference>
<dbReference type="Gene3D" id="1.25.10.10">
    <property type="entry name" value="Leucine-rich Repeat Variant"/>
    <property type="match status" value="1"/>
</dbReference>
<dbReference type="InterPro" id="IPR016643">
    <property type="entry name" value="26S_Psome_Rpn1"/>
</dbReference>
<dbReference type="InterPro" id="IPR011989">
    <property type="entry name" value="ARM-like"/>
</dbReference>
<dbReference type="InterPro" id="IPR016024">
    <property type="entry name" value="ARM-type_fold"/>
</dbReference>
<dbReference type="InterPro" id="IPR002015">
    <property type="entry name" value="Proteasome/cyclosome_rpt"/>
</dbReference>
<dbReference type="InterPro" id="IPR041433">
    <property type="entry name" value="RPN1_C"/>
</dbReference>
<dbReference type="InterPro" id="IPR040892">
    <property type="entry name" value="RPN1_N"/>
</dbReference>
<dbReference type="PANTHER" id="PTHR10943">
    <property type="entry name" value="26S PROTEASOME NON-ATPASE REGULATORY SUBUNIT"/>
    <property type="match status" value="1"/>
</dbReference>
<dbReference type="PANTHER" id="PTHR10943:SF24">
    <property type="entry name" value="26S PROTEASOME NON-ATPASE REGULATORY SUBUNIT 2 HOMOLOG B"/>
    <property type="match status" value="1"/>
</dbReference>
<dbReference type="Pfam" id="PF01851">
    <property type="entry name" value="PC_rep"/>
    <property type="match status" value="2"/>
</dbReference>
<dbReference type="Pfam" id="PF18051">
    <property type="entry name" value="RPN1_C"/>
    <property type="match status" value="1"/>
</dbReference>
<dbReference type="Pfam" id="PF17781">
    <property type="entry name" value="RPN1_RPN2_N"/>
    <property type="match status" value="1"/>
</dbReference>
<dbReference type="PIRSF" id="PIRSF015965">
    <property type="entry name" value="26S_Psome_Rpn1"/>
    <property type="match status" value="1"/>
</dbReference>
<dbReference type="SUPFAM" id="SSF48371">
    <property type="entry name" value="ARM repeat"/>
    <property type="match status" value="1"/>
</dbReference>